<name>RUTD_ECOSM</name>
<organism>
    <name type="scientific">Escherichia coli (strain SMS-3-5 / SECEC)</name>
    <dbReference type="NCBI Taxonomy" id="439855"/>
    <lineage>
        <taxon>Bacteria</taxon>
        <taxon>Pseudomonadati</taxon>
        <taxon>Pseudomonadota</taxon>
        <taxon>Gammaproteobacteria</taxon>
        <taxon>Enterobacterales</taxon>
        <taxon>Enterobacteriaceae</taxon>
        <taxon>Escherichia</taxon>
    </lineage>
</organism>
<protein>
    <recommendedName>
        <fullName evidence="1">Putative carbamate hydrolase RutD</fullName>
        <ecNumber evidence="1">3.5.1.-</ecNumber>
    </recommendedName>
    <alternativeName>
        <fullName evidence="1">Aminohydrolase</fullName>
    </alternativeName>
</protein>
<evidence type="ECO:0000255" key="1">
    <source>
        <dbReference type="HAMAP-Rule" id="MF_00832"/>
    </source>
</evidence>
<reference key="1">
    <citation type="journal article" date="2008" name="J. Bacteriol.">
        <title>Insights into the environmental resistance gene pool from the genome sequence of the multidrug-resistant environmental isolate Escherichia coli SMS-3-5.</title>
        <authorList>
            <person name="Fricke W.F."/>
            <person name="Wright M.S."/>
            <person name="Lindell A.H."/>
            <person name="Harkins D.M."/>
            <person name="Baker-Austin C."/>
            <person name="Ravel J."/>
            <person name="Stepanauskas R."/>
        </authorList>
    </citation>
    <scope>NUCLEOTIDE SEQUENCE [LARGE SCALE GENOMIC DNA]</scope>
    <source>
        <strain>SMS-3-5 / SECEC</strain>
    </source>
</reference>
<keyword id="KW-0378">Hydrolase</keyword>
<gene>
    <name evidence="1" type="primary">rutD</name>
    <name type="ordered locus">EcSMS35_2116</name>
</gene>
<sequence>MKLSLSPPPYADAPVVVLISGLGGSGSYWLPQLAVLEQEYQVVCYDQRGTGNNPDTLAEDYSIAQMAAELHQALVAAGIERYAVVGHALGALVGMQLALDYPASVTVLVSVNGWLRINAHTRRCFQVREQLLHSGGAQAWVEAQPLFLYPADWMAARAPRLEAEDALALAHFQGKNNLLRRLNALKRADFSRHADRIRCPVQIICASDDLLVPTACSSELHAALPDSQKMVMRYGGHACNVTDPETFNALLLNGLASLLHHREAACKELL</sequence>
<feature type="chain" id="PRO_0000402945" description="Putative carbamate hydrolase RutD">
    <location>
        <begin position="1"/>
        <end position="270"/>
    </location>
</feature>
<comment type="function">
    <text evidence="1">Involved in pyrimidine catabolism. May facilitate the hydrolysis of carbamate, a reaction that can also occur spontaneously.</text>
</comment>
<comment type="catalytic activity">
    <reaction evidence="1">
        <text>carbamate + 2 H(+) = NH4(+) + CO2</text>
        <dbReference type="Rhea" id="RHEA:15649"/>
        <dbReference type="ChEBI" id="CHEBI:13941"/>
        <dbReference type="ChEBI" id="CHEBI:15378"/>
        <dbReference type="ChEBI" id="CHEBI:16526"/>
        <dbReference type="ChEBI" id="CHEBI:28938"/>
    </reaction>
</comment>
<comment type="similarity">
    <text evidence="1">Belongs to the AB hydrolase superfamily. Hydrolase RutD family.</text>
</comment>
<accession>B1LIZ6</accession>
<proteinExistence type="inferred from homology"/>
<dbReference type="EC" id="3.5.1.-" evidence="1"/>
<dbReference type="EMBL" id="CP000970">
    <property type="protein sequence ID" value="ACB17325.1"/>
    <property type="molecule type" value="Genomic_DNA"/>
</dbReference>
<dbReference type="RefSeq" id="WP_000777660.1">
    <property type="nucleotide sequence ID" value="NC_010498.1"/>
</dbReference>
<dbReference type="SMR" id="B1LIZ6"/>
<dbReference type="ESTHER" id="ecoli-rutD">
    <property type="family name" value="RutD"/>
</dbReference>
<dbReference type="KEGG" id="ecm:EcSMS35_2116"/>
<dbReference type="HOGENOM" id="CLU_020336_50_1_6"/>
<dbReference type="Proteomes" id="UP000007011">
    <property type="component" value="Chromosome"/>
</dbReference>
<dbReference type="GO" id="GO:0016020">
    <property type="term" value="C:membrane"/>
    <property type="evidence" value="ECO:0007669"/>
    <property type="project" value="TreeGrafter"/>
</dbReference>
<dbReference type="GO" id="GO:0016811">
    <property type="term" value="F:hydrolase activity, acting on carbon-nitrogen (but not peptide) bonds, in linear amides"/>
    <property type="evidence" value="ECO:0007669"/>
    <property type="project" value="InterPro"/>
</dbReference>
<dbReference type="GO" id="GO:0019740">
    <property type="term" value="P:nitrogen utilization"/>
    <property type="evidence" value="ECO:0007669"/>
    <property type="project" value="UniProtKB-UniRule"/>
</dbReference>
<dbReference type="GO" id="GO:0006212">
    <property type="term" value="P:uracil catabolic process"/>
    <property type="evidence" value="ECO:0007669"/>
    <property type="project" value="UniProtKB-UniRule"/>
</dbReference>
<dbReference type="FunFam" id="3.40.50.1820:FF:000052">
    <property type="entry name" value="Putative aminoacrylate hydrolase RutD"/>
    <property type="match status" value="1"/>
</dbReference>
<dbReference type="Gene3D" id="3.40.50.1820">
    <property type="entry name" value="alpha/beta hydrolase"/>
    <property type="match status" value="1"/>
</dbReference>
<dbReference type="HAMAP" id="MF_00832">
    <property type="entry name" value="RutD"/>
    <property type="match status" value="1"/>
</dbReference>
<dbReference type="InterPro" id="IPR000073">
    <property type="entry name" value="AB_hydrolase_1"/>
</dbReference>
<dbReference type="InterPro" id="IPR029058">
    <property type="entry name" value="AB_hydrolase_fold"/>
</dbReference>
<dbReference type="InterPro" id="IPR050266">
    <property type="entry name" value="AB_hydrolase_sf"/>
</dbReference>
<dbReference type="InterPro" id="IPR019913">
    <property type="entry name" value="Pyrimidine_utilisation_RutD"/>
</dbReference>
<dbReference type="NCBIfam" id="TIGR03611">
    <property type="entry name" value="RutD"/>
    <property type="match status" value="1"/>
</dbReference>
<dbReference type="PANTHER" id="PTHR43798:SF27">
    <property type="entry name" value="HYDROLASE ALPHA_BETA HYDROLASE FOLD FAMILY"/>
    <property type="match status" value="1"/>
</dbReference>
<dbReference type="PANTHER" id="PTHR43798">
    <property type="entry name" value="MONOACYLGLYCEROL LIPASE"/>
    <property type="match status" value="1"/>
</dbReference>
<dbReference type="Pfam" id="PF00561">
    <property type="entry name" value="Abhydrolase_1"/>
    <property type="match status" value="1"/>
</dbReference>
<dbReference type="PRINTS" id="PR00111">
    <property type="entry name" value="ABHYDROLASE"/>
</dbReference>
<dbReference type="SUPFAM" id="SSF53474">
    <property type="entry name" value="alpha/beta-Hydrolases"/>
    <property type="match status" value="1"/>
</dbReference>